<organism>
    <name type="scientific">Salmonella choleraesuis (strain SC-B67)</name>
    <dbReference type="NCBI Taxonomy" id="321314"/>
    <lineage>
        <taxon>Bacteria</taxon>
        <taxon>Pseudomonadati</taxon>
        <taxon>Pseudomonadota</taxon>
        <taxon>Gammaproteobacteria</taxon>
        <taxon>Enterobacterales</taxon>
        <taxon>Enterobacteriaceae</taxon>
        <taxon>Salmonella</taxon>
    </lineage>
</organism>
<keyword id="KW-0413">Isomerase</keyword>
<keyword id="KW-0819">tRNA processing</keyword>
<comment type="function">
    <text evidence="1">Formation of pseudouridine at positions 38, 39 and 40 in the anticodon stem and loop of transfer RNAs.</text>
</comment>
<comment type="catalytic activity">
    <reaction evidence="1">
        <text>uridine(38/39/40) in tRNA = pseudouridine(38/39/40) in tRNA</text>
        <dbReference type="Rhea" id="RHEA:22376"/>
        <dbReference type="Rhea" id="RHEA-COMP:10085"/>
        <dbReference type="Rhea" id="RHEA-COMP:10087"/>
        <dbReference type="ChEBI" id="CHEBI:65314"/>
        <dbReference type="ChEBI" id="CHEBI:65315"/>
        <dbReference type="EC" id="5.4.99.12"/>
    </reaction>
</comment>
<comment type="subunit">
    <text evidence="1">Homodimer.</text>
</comment>
<comment type="similarity">
    <text evidence="1">Belongs to the tRNA pseudouridine synthase TruA family.</text>
</comment>
<name>TRUA_SALCH</name>
<accession>Q57LY6</accession>
<evidence type="ECO:0000255" key="1">
    <source>
        <dbReference type="HAMAP-Rule" id="MF_00171"/>
    </source>
</evidence>
<feature type="chain" id="PRO_1000017162" description="tRNA pseudouridine synthase A">
    <location>
        <begin position="1"/>
        <end position="270"/>
    </location>
</feature>
<feature type="active site" description="Nucleophile" evidence="1">
    <location>
        <position position="60"/>
    </location>
</feature>
<feature type="binding site" evidence="1">
    <location>
        <position position="118"/>
    </location>
    <ligand>
        <name>substrate</name>
    </ligand>
</feature>
<protein>
    <recommendedName>
        <fullName evidence="1">tRNA pseudouridine synthase A</fullName>
        <ecNumber evidence="1">5.4.99.12</ecNumber>
    </recommendedName>
    <alternativeName>
        <fullName evidence="1">tRNA pseudouridine(38-40) synthase</fullName>
    </alternativeName>
    <alternativeName>
        <fullName evidence="1">tRNA pseudouridylate synthase I</fullName>
    </alternativeName>
    <alternativeName>
        <fullName evidence="1">tRNA-uridine isomerase I</fullName>
    </alternativeName>
</protein>
<gene>
    <name evidence="1" type="primary">truA</name>
    <name type="ordered locus">SCH_2370</name>
</gene>
<proteinExistence type="inferred from homology"/>
<sequence>MSGQQSSPVYKIALGIEYDGSKYYGWQRQNEVRSVQEKLEKALSQVANEPINVFCAGRTDAGVHGTGQVVHFETTALRKDAAWTLGVNANLPGDIAVRWVKTVPDDFHARFSATARRYRYIIYNHRLRPAVLAKGVTHYYEPLDAERMHRAAQCLLGENDFTSFRAVQCQSRTPWRNVMHINVTRHGPYVVVDIKANAFVHHMVRNIVGSLLEVGAHNQPESWIAELLAARDRTLAAATAKAEGLYLVAVDYPDRFDLPKPPMGPLFLAD</sequence>
<dbReference type="EC" id="5.4.99.12" evidence="1"/>
<dbReference type="EMBL" id="AE017220">
    <property type="protein sequence ID" value="AAX66276.1"/>
    <property type="molecule type" value="Genomic_DNA"/>
</dbReference>
<dbReference type="RefSeq" id="WP_000016631.1">
    <property type="nucleotide sequence ID" value="NC_006905.1"/>
</dbReference>
<dbReference type="SMR" id="Q57LY6"/>
<dbReference type="KEGG" id="sec:SCH_2370"/>
<dbReference type="HOGENOM" id="CLU_014673_0_2_6"/>
<dbReference type="Proteomes" id="UP000000538">
    <property type="component" value="Chromosome"/>
</dbReference>
<dbReference type="GO" id="GO:0003723">
    <property type="term" value="F:RNA binding"/>
    <property type="evidence" value="ECO:0007669"/>
    <property type="project" value="InterPro"/>
</dbReference>
<dbReference type="GO" id="GO:0160147">
    <property type="term" value="F:tRNA pseudouridine(38-40) synthase activity"/>
    <property type="evidence" value="ECO:0007669"/>
    <property type="project" value="UniProtKB-EC"/>
</dbReference>
<dbReference type="GO" id="GO:0031119">
    <property type="term" value="P:tRNA pseudouridine synthesis"/>
    <property type="evidence" value="ECO:0007669"/>
    <property type="project" value="UniProtKB-UniRule"/>
</dbReference>
<dbReference type="CDD" id="cd02570">
    <property type="entry name" value="PseudoU_synth_EcTruA"/>
    <property type="match status" value="1"/>
</dbReference>
<dbReference type="FunFam" id="3.30.70.580:FF:000001">
    <property type="entry name" value="tRNA pseudouridine synthase A"/>
    <property type="match status" value="1"/>
</dbReference>
<dbReference type="FunFam" id="3.30.70.660:FF:000001">
    <property type="entry name" value="tRNA pseudouridine synthase A"/>
    <property type="match status" value="1"/>
</dbReference>
<dbReference type="Gene3D" id="3.30.70.660">
    <property type="entry name" value="Pseudouridine synthase I, catalytic domain, C-terminal subdomain"/>
    <property type="match status" value="1"/>
</dbReference>
<dbReference type="Gene3D" id="3.30.70.580">
    <property type="entry name" value="Pseudouridine synthase I, catalytic domain, N-terminal subdomain"/>
    <property type="match status" value="1"/>
</dbReference>
<dbReference type="HAMAP" id="MF_00171">
    <property type="entry name" value="TruA"/>
    <property type="match status" value="1"/>
</dbReference>
<dbReference type="InterPro" id="IPR020103">
    <property type="entry name" value="PsdUridine_synth_cat_dom_sf"/>
</dbReference>
<dbReference type="InterPro" id="IPR001406">
    <property type="entry name" value="PsdUridine_synth_TruA"/>
</dbReference>
<dbReference type="InterPro" id="IPR020097">
    <property type="entry name" value="PsdUridine_synth_TruA_a/b_dom"/>
</dbReference>
<dbReference type="InterPro" id="IPR020095">
    <property type="entry name" value="PsdUridine_synth_TruA_C"/>
</dbReference>
<dbReference type="InterPro" id="IPR020094">
    <property type="entry name" value="TruA/RsuA/RluB/E/F_N"/>
</dbReference>
<dbReference type="NCBIfam" id="TIGR00071">
    <property type="entry name" value="hisT_truA"/>
    <property type="match status" value="1"/>
</dbReference>
<dbReference type="PANTHER" id="PTHR11142">
    <property type="entry name" value="PSEUDOURIDYLATE SYNTHASE"/>
    <property type="match status" value="1"/>
</dbReference>
<dbReference type="PANTHER" id="PTHR11142:SF0">
    <property type="entry name" value="TRNA PSEUDOURIDINE SYNTHASE-LIKE 1"/>
    <property type="match status" value="1"/>
</dbReference>
<dbReference type="Pfam" id="PF01416">
    <property type="entry name" value="PseudoU_synth_1"/>
    <property type="match status" value="2"/>
</dbReference>
<dbReference type="PIRSF" id="PIRSF001430">
    <property type="entry name" value="tRNA_psdUrid_synth"/>
    <property type="match status" value="1"/>
</dbReference>
<dbReference type="SUPFAM" id="SSF55120">
    <property type="entry name" value="Pseudouridine synthase"/>
    <property type="match status" value="1"/>
</dbReference>
<reference key="1">
    <citation type="journal article" date="2005" name="Nucleic Acids Res.">
        <title>The genome sequence of Salmonella enterica serovar Choleraesuis, a highly invasive and resistant zoonotic pathogen.</title>
        <authorList>
            <person name="Chiu C.-H."/>
            <person name="Tang P."/>
            <person name="Chu C."/>
            <person name="Hu S."/>
            <person name="Bao Q."/>
            <person name="Yu J."/>
            <person name="Chou Y.-Y."/>
            <person name="Wang H.-S."/>
            <person name="Lee Y.-S."/>
        </authorList>
    </citation>
    <scope>NUCLEOTIDE SEQUENCE [LARGE SCALE GENOMIC DNA]</scope>
    <source>
        <strain>SC-B67</strain>
    </source>
</reference>